<comment type="function">
    <text evidence="1">Component of the proteasome core, a large protease complex with broad specificity involved in protein degradation.</text>
</comment>
<comment type="catalytic activity">
    <reaction evidence="1">
        <text>Cleavage of peptide bonds with very broad specificity.</text>
        <dbReference type="EC" id="3.4.25.1"/>
    </reaction>
</comment>
<comment type="activity regulation">
    <text evidence="1">The formation of the proteasomal ATPase PAN-20S proteasome complex, via the docking of the C-termini of PAN into the intersubunit pockets in the alpha-rings, triggers opening of the gate for substrate entry. Interconversion between the open-gate and close-gate conformations leads to a dynamic regulation of the 20S proteasome proteolysis activity.</text>
</comment>
<comment type="subunit">
    <text evidence="1">The 20S proteasome core is composed of 14 alpha and 14 beta subunits that assemble into four stacked heptameric rings, resulting in a barrel-shaped structure. The two inner rings, each composed of seven catalytic beta subunits, are sandwiched by two outer rings, each composed of seven alpha subunits. The catalytic chamber with the active sites is on the inside of the barrel. Has a gated structure, the ends of the cylinder being occluded by the N-termini of the alpha-subunits. Is capped at one or both ends by the proteasome regulatory ATPase, PAN.</text>
</comment>
<comment type="subcellular location">
    <subcellularLocation>
        <location evidence="1">Cytoplasm</location>
    </subcellularLocation>
</comment>
<comment type="similarity">
    <text evidence="1">Belongs to the peptidase T1B family.</text>
</comment>
<dbReference type="EC" id="3.4.25.1" evidence="1"/>
<dbReference type="EMBL" id="AY596297">
    <property type="protein sequence ID" value="AAV45476.1"/>
    <property type="molecule type" value="Genomic_DNA"/>
</dbReference>
<dbReference type="SMR" id="Q5V4S6"/>
<dbReference type="STRING" id="272569.rrnAC0442"/>
<dbReference type="MEROPS" id="T01.002"/>
<dbReference type="PaxDb" id="272569-rrnAC0442"/>
<dbReference type="EnsemblBacteria" id="AAV45476">
    <property type="protein sequence ID" value="AAV45476"/>
    <property type="gene ID" value="rrnAC0442"/>
</dbReference>
<dbReference type="KEGG" id="hma:rrnAC0442"/>
<dbReference type="PATRIC" id="fig|272569.17.peg.1219"/>
<dbReference type="eggNOG" id="arCOG00970">
    <property type="taxonomic scope" value="Archaea"/>
</dbReference>
<dbReference type="HOGENOM" id="CLU_035750_7_2_2"/>
<dbReference type="Proteomes" id="UP000001169">
    <property type="component" value="Chromosome I"/>
</dbReference>
<dbReference type="GO" id="GO:0005737">
    <property type="term" value="C:cytoplasm"/>
    <property type="evidence" value="ECO:0007669"/>
    <property type="project" value="UniProtKB-SubCell"/>
</dbReference>
<dbReference type="GO" id="GO:0019774">
    <property type="term" value="C:proteasome core complex, beta-subunit complex"/>
    <property type="evidence" value="ECO:0007669"/>
    <property type="project" value="UniProtKB-UniRule"/>
</dbReference>
<dbReference type="GO" id="GO:0004298">
    <property type="term" value="F:threonine-type endopeptidase activity"/>
    <property type="evidence" value="ECO:0007669"/>
    <property type="project" value="UniProtKB-UniRule"/>
</dbReference>
<dbReference type="GO" id="GO:0010498">
    <property type="term" value="P:proteasomal protein catabolic process"/>
    <property type="evidence" value="ECO:0007669"/>
    <property type="project" value="UniProtKB-UniRule"/>
</dbReference>
<dbReference type="Gene3D" id="3.60.20.10">
    <property type="entry name" value="Glutamine Phosphoribosylpyrophosphate, subunit 1, domain 1"/>
    <property type="match status" value="1"/>
</dbReference>
<dbReference type="HAMAP" id="MF_02113_A">
    <property type="entry name" value="Proteasome_B_A"/>
    <property type="match status" value="1"/>
</dbReference>
<dbReference type="InterPro" id="IPR029055">
    <property type="entry name" value="Ntn_hydrolases_N"/>
</dbReference>
<dbReference type="InterPro" id="IPR019983">
    <property type="entry name" value="Pept_T1A_Psome_bsu_arc"/>
</dbReference>
<dbReference type="InterPro" id="IPR000243">
    <property type="entry name" value="Pept_T1A_subB"/>
</dbReference>
<dbReference type="InterPro" id="IPR001353">
    <property type="entry name" value="Proteasome_sua/b"/>
</dbReference>
<dbReference type="InterPro" id="IPR023333">
    <property type="entry name" value="Proteasome_suB-type"/>
</dbReference>
<dbReference type="NCBIfam" id="TIGR03634">
    <property type="entry name" value="arc_protsome_B"/>
    <property type="match status" value="1"/>
</dbReference>
<dbReference type="PANTHER" id="PTHR32194:SF0">
    <property type="entry name" value="ATP-DEPENDENT PROTEASE SUBUNIT HSLV"/>
    <property type="match status" value="1"/>
</dbReference>
<dbReference type="PANTHER" id="PTHR32194">
    <property type="entry name" value="METALLOPROTEASE TLDD"/>
    <property type="match status" value="1"/>
</dbReference>
<dbReference type="Pfam" id="PF00227">
    <property type="entry name" value="Proteasome"/>
    <property type="match status" value="1"/>
</dbReference>
<dbReference type="PRINTS" id="PR00141">
    <property type="entry name" value="PROTEASOME"/>
</dbReference>
<dbReference type="SUPFAM" id="SSF56235">
    <property type="entry name" value="N-terminal nucleophile aminohydrolases (Ntn hydrolases)"/>
    <property type="match status" value="1"/>
</dbReference>
<dbReference type="PROSITE" id="PS51476">
    <property type="entry name" value="PROTEASOME_BETA_2"/>
    <property type="match status" value="1"/>
</dbReference>
<protein>
    <recommendedName>
        <fullName evidence="1">Proteasome subunit beta 1</fullName>
        <ecNumber evidence="1">3.4.25.1</ecNumber>
    </recommendedName>
    <alternativeName>
        <fullName evidence="1">20S proteasome beta subunit 1</fullName>
    </alternativeName>
    <alternativeName>
        <fullName evidence="1">Proteasome core protein PsmB 1</fullName>
    </alternativeName>
</protein>
<reference key="1">
    <citation type="journal article" date="2004" name="Genome Res.">
        <title>Genome sequence of Haloarcula marismortui: a halophilic archaeon from the Dead Sea.</title>
        <authorList>
            <person name="Baliga N.S."/>
            <person name="Bonneau R."/>
            <person name="Facciotti M.T."/>
            <person name="Pan M."/>
            <person name="Glusman G."/>
            <person name="Deutsch E.W."/>
            <person name="Shannon P."/>
            <person name="Chiu Y."/>
            <person name="Weng R.S."/>
            <person name="Gan R.R."/>
            <person name="Hung P."/>
            <person name="Date S.V."/>
            <person name="Marcotte E."/>
            <person name="Hood L."/>
            <person name="Ng W.V."/>
        </authorList>
    </citation>
    <scope>NUCLEOTIDE SEQUENCE [LARGE SCALE GENOMIC DNA]</scope>
    <source>
        <strain>ATCC 43049 / DSM 3752 / JCM 8966 / VKM B-1809</strain>
    </source>
</reference>
<proteinExistence type="inferred from homology"/>
<organism>
    <name type="scientific">Haloarcula marismortui (strain ATCC 43049 / DSM 3752 / JCM 8966 / VKM B-1809)</name>
    <name type="common">Halobacterium marismortui</name>
    <dbReference type="NCBI Taxonomy" id="272569"/>
    <lineage>
        <taxon>Archaea</taxon>
        <taxon>Methanobacteriati</taxon>
        <taxon>Methanobacteriota</taxon>
        <taxon>Stenosarchaea group</taxon>
        <taxon>Halobacteria</taxon>
        <taxon>Halobacteriales</taxon>
        <taxon>Haloarculaceae</taxon>
        <taxon>Haloarcula</taxon>
    </lineage>
</organism>
<gene>
    <name evidence="1" type="primary">psmB1</name>
    <name type="ordered locus">rrnAC0442</name>
</gene>
<name>PSB1_HALMA</name>
<keyword id="KW-0068">Autocatalytic cleavage</keyword>
<keyword id="KW-0963">Cytoplasm</keyword>
<keyword id="KW-0378">Hydrolase</keyword>
<keyword id="KW-0645">Protease</keyword>
<keyword id="KW-0647">Proteasome</keyword>
<keyword id="KW-1185">Reference proteome</keyword>
<keyword id="KW-0888">Threonine protease</keyword>
<keyword id="KW-0865">Zymogen</keyword>
<sequence>MRDMTPGPDLSGPQAADEFQSDPYAPEVGELPEQSAQDSEKVNKTGTTTIGISTSDGVVIATDMRASLGGRFVSNKNVQKVEEIHPTAALTLVGSVGGAQSFIRTLRAEVNLYEARRGEDISMKALSTLAGNFARGGPFFAINPILGGVDDDGHHVYSIDPAGGVMKDDYTVTGSGLTVAYGTLEDRYEEDMTNEEAKEVAAASIKAAAERDTGSGNGIYLADVTADGVDINGYDFDELL</sequence>
<evidence type="ECO:0000255" key="1">
    <source>
        <dbReference type="HAMAP-Rule" id="MF_02113"/>
    </source>
</evidence>
<evidence type="ECO:0000256" key="2">
    <source>
        <dbReference type="SAM" id="MobiDB-lite"/>
    </source>
</evidence>
<accession>Q5V4S6</accession>
<feature type="propeptide" id="PRO_0000397296" description="Removed in mature form; by autocatalysis" evidence="1">
    <location>
        <begin position="1"/>
        <end position="46"/>
    </location>
</feature>
<feature type="chain" id="PRO_0000397297" description="Proteasome subunit beta 1">
    <location>
        <begin position="47"/>
        <end position="240"/>
    </location>
</feature>
<feature type="region of interest" description="Disordered" evidence="2">
    <location>
        <begin position="1"/>
        <end position="48"/>
    </location>
</feature>
<feature type="active site" description="Nucleophile" evidence="1">
    <location>
        <position position="47"/>
    </location>
</feature>